<accession>Q2ICQ4</accession>
<feature type="chain" id="PRO_0000324251" description="Non-structural protein 1">
    <location>
        <begin position="1"/>
        <end position="220"/>
    </location>
</feature>
<feature type="region of interest" description="RNA-binding and homodimerization" evidence="1">
    <location>
        <begin position="1"/>
        <end position="73"/>
    </location>
</feature>
<feature type="region of interest" description="CPSF4-binding" evidence="1">
    <location>
        <begin position="180"/>
        <end position="215"/>
    </location>
</feature>
<feature type="short sequence motif" description="Nuclear localization signal" evidence="1">
    <location>
        <begin position="34"/>
        <end position="38"/>
    </location>
</feature>
<feature type="short sequence motif" description="Nuclear export signal" evidence="1">
    <location>
        <begin position="137"/>
        <end position="146"/>
    </location>
</feature>
<keyword id="KW-0025">Alternative splicing</keyword>
<keyword id="KW-1262">Eukaryotic host gene expression shutoff by virus</keyword>
<keyword id="KW-1035">Host cytoplasm</keyword>
<keyword id="KW-1190">Host gene expression shutoff by virus</keyword>
<keyword id="KW-1192">Host mRNA suppression by virus</keyword>
<keyword id="KW-1048">Host nucleus</keyword>
<keyword id="KW-0945">Host-virus interaction</keyword>
<keyword id="KW-1090">Inhibition of host innate immune response by virus</keyword>
<keyword id="KW-1114">Inhibition of host interferon signaling pathway by virus</keyword>
<keyword id="KW-1102">Inhibition of host PKR by virus</keyword>
<keyword id="KW-1103">Inhibition of host pre-mRNA processing by virus</keyword>
<keyword id="KW-1088">Inhibition of host RIG-I by virus</keyword>
<keyword id="KW-1113">Inhibition of host RLR pathway by virus</keyword>
<keyword id="KW-0922">Interferon antiviral system evasion</keyword>
<keyword id="KW-0694">RNA-binding</keyword>
<keyword id="KW-0832">Ubl conjugation</keyword>
<keyword id="KW-0899">Viral immunoevasion</keyword>
<sequence>MDSNTVSSFQVDCFLWHVRKQVVDQELGDAPFLDRLRRDQKSLRGRGSTLGLNIEAATHVGKQIVEKILKEESDEALKMTMASTPASRYITDMTIEELSRDWFMLMPKQKVEGPLCIRIDQAIMDKNIMLKANFSVIFDRLETLILLRAFTEEGAIVGEISPLPSFPGHTIEDVKNAIGVLIGGLEWNDNTVRVSKTLQRFAWGSSNENGRPPLTPKQKR</sequence>
<proteinExistence type="inferred from homology"/>
<dbReference type="EMBL" id="CY008680">
    <property type="protein sequence ID" value="ABD17328.1"/>
    <property type="molecule type" value="Genomic_RNA"/>
</dbReference>
<dbReference type="BMRB" id="Q2ICQ4"/>
<dbReference type="SMR" id="Q2ICQ4"/>
<dbReference type="Proteomes" id="UP000009189">
    <property type="component" value="Genome"/>
</dbReference>
<dbReference type="GO" id="GO:0030430">
    <property type="term" value="C:host cell cytoplasm"/>
    <property type="evidence" value="ECO:0007669"/>
    <property type="project" value="UniProtKB-SubCell"/>
</dbReference>
<dbReference type="GO" id="GO:0042025">
    <property type="term" value="C:host cell nucleus"/>
    <property type="evidence" value="ECO:0007669"/>
    <property type="project" value="UniProtKB-SubCell"/>
</dbReference>
<dbReference type="GO" id="GO:0030291">
    <property type="term" value="F:protein serine/threonine kinase inhibitor activity"/>
    <property type="evidence" value="ECO:0007669"/>
    <property type="project" value="UniProtKB-KW"/>
</dbReference>
<dbReference type="GO" id="GO:0003723">
    <property type="term" value="F:RNA binding"/>
    <property type="evidence" value="ECO:0007669"/>
    <property type="project" value="UniProtKB-KW"/>
</dbReference>
<dbReference type="GO" id="GO:0039540">
    <property type="term" value="P:symbiont-mediated suppression of host cytoplasmic pattern recognition receptor signaling pathway via inhibition of RIG-I activity"/>
    <property type="evidence" value="ECO:0007669"/>
    <property type="project" value="UniProtKB-KW"/>
</dbReference>
<dbReference type="GO" id="GO:0039657">
    <property type="term" value="P:symbiont-mediated suppression of host gene expression"/>
    <property type="evidence" value="ECO:0007669"/>
    <property type="project" value="UniProtKB-KW"/>
</dbReference>
<dbReference type="GO" id="GO:0039524">
    <property type="term" value="P:symbiont-mediated suppression of host mRNA processing"/>
    <property type="evidence" value="ECO:0007669"/>
    <property type="project" value="UniProtKB-KW"/>
</dbReference>
<dbReference type="GO" id="GO:0039580">
    <property type="term" value="P:symbiont-mediated suppression of host PKR/eIFalpha signaling"/>
    <property type="evidence" value="ECO:0007669"/>
    <property type="project" value="UniProtKB-KW"/>
</dbReference>
<dbReference type="GO" id="GO:0039502">
    <property type="term" value="P:symbiont-mediated suppression of host type I interferon-mediated signaling pathway"/>
    <property type="evidence" value="ECO:0007669"/>
    <property type="project" value="UniProtKB-KW"/>
</dbReference>
<dbReference type="FunFam" id="1.10.287.10:FF:000001">
    <property type="entry name" value="Non-structural protein 1"/>
    <property type="match status" value="1"/>
</dbReference>
<dbReference type="FunFam" id="3.30.420.330:FF:000001">
    <property type="entry name" value="Non-structural protein 1"/>
    <property type="match status" value="1"/>
</dbReference>
<dbReference type="Gene3D" id="3.30.420.330">
    <property type="entry name" value="Influenza virus non-structural protein, effector domain"/>
    <property type="match status" value="1"/>
</dbReference>
<dbReference type="Gene3D" id="1.10.287.10">
    <property type="entry name" value="S15/NS1, RNA-binding"/>
    <property type="match status" value="1"/>
</dbReference>
<dbReference type="HAMAP" id="MF_04066">
    <property type="entry name" value="INFV_NS1"/>
    <property type="match status" value="1"/>
</dbReference>
<dbReference type="InterPro" id="IPR004208">
    <property type="entry name" value="NS1"/>
</dbReference>
<dbReference type="InterPro" id="IPR000256">
    <property type="entry name" value="NS1A"/>
</dbReference>
<dbReference type="InterPro" id="IPR038064">
    <property type="entry name" value="NS1A_effect_dom-like_sf"/>
</dbReference>
<dbReference type="InterPro" id="IPR009068">
    <property type="entry name" value="uS15_NS1_RNA-bd_sf"/>
</dbReference>
<dbReference type="Pfam" id="PF00600">
    <property type="entry name" value="Flu_NS1"/>
    <property type="match status" value="1"/>
</dbReference>
<dbReference type="SUPFAM" id="SSF143021">
    <property type="entry name" value="Ns1 effector domain-like"/>
    <property type="match status" value="1"/>
</dbReference>
<dbReference type="SUPFAM" id="SSF47060">
    <property type="entry name" value="S15/NS1 RNA-binding domain"/>
    <property type="match status" value="1"/>
</dbReference>
<reference key="1">
    <citation type="submission" date="2006-02" db="EMBL/GenBank/DDBJ databases">
        <title>The NIAID influenza genome sequencing project.</title>
        <authorList>
            <person name="Ghedin E."/>
            <person name="Spiro D."/>
            <person name="Miller N."/>
            <person name="Zaborsky J."/>
            <person name="Feldblyum T."/>
            <person name="Subbu V."/>
            <person name="Shumway M."/>
            <person name="Sparenborg J."/>
            <person name="Groveman L."/>
            <person name="Halpin R."/>
            <person name="Sitz J."/>
            <person name="Koo H."/>
            <person name="Salzberg S.L."/>
            <person name="Webster R.G."/>
            <person name="Hoffmann E."/>
            <person name="Krauss S."/>
            <person name="Naeve C."/>
            <person name="Bao Y."/>
            <person name="Bolotov P."/>
            <person name="Dernovoy D."/>
            <person name="Kiryutin B."/>
            <person name="Lipman D.J."/>
            <person name="Tatusova T."/>
        </authorList>
    </citation>
    <scope>NUCLEOTIDE SEQUENCE [GENOMIC RNA]</scope>
</reference>
<protein>
    <recommendedName>
        <fullName evidence="1">Non-structural protein 1</fullName>
        <shortName evidence="1">NS1</shortName>
    </recommendedName>
    <alternativeName>
        <fullName evidence="1">NS1A</fullName>
    </alternativeName>
</protein>
<gene>
    <name evidence="1" type="primary">NS</name>
</gene>
<comment type="function">
    <text evidence="1">Inhibits post-transcriptional processing of cellular pre-mRNA, by binding and inhibiting two cellular proteins that are required for the 3'-end processing of cellular pre-mRNAs: the 30 kDa cleavage and polyadenylation specificity factor/CPSF4 and the poly(A)-binding protein 2/PABPN1. In turn, unprocessed 3' end pre-mRNAs accumulate in the host nucleus and are no longer exported to the cytoplasm. Cellular protein synthesis is thereby shut off very early after virus infection. Viral protein synthesis is not affected by the inhibition of the cellular 3' end processing machinery because the poly(A) tails of viral mRNAs are produced by the viral polymerase through a stuttering mechanism. Prevents the establishment of the cellular antiviral state by inhibiting TRIM25-mediated RIGI ubiquitination, which normally triggers the antiviral transduction signal that leads to the activation of type I IFN genes by transcription factors IRF3 and IRF7. Also binds poly(A) and U6 snRNA. Inhibits the integrated stress response (ISR) in the infected cell by blocking dsRNA binding by EIF2AK2/PKR and further phosphorylation of EIF2S1/EIF-2ALPHA. Stress granule formation is thus inhibited, which allows protein synthesis and viral replication.</text>
</comment>
<comment type="subunit">
    <text evidence="1">Homodimer. Interacts with host TRIM25 (via coiled coil); this interaction specifically inhibits TRIM25 multimerization and TRIM25-mediated RIGI CARD ubiquitination. Interacts with human EIF2AK2/PKR, CPSF4, IVNS1ABP and PABPN1.</text>
</comment>
<comment type="subcellular location">
    <subcellularLocation>
        <location evidence="1">Host nucleus</location>
    </subcellularLocation>
    <subcellularLocation>
        <location evidence="1">Host cytoplasm</location>
    </subcellularLocation>
    <text evidence="1">In uninfected, transfected cells, NS1 is localized in the nucleus. Only in virus infected cells, the nuclear export signal is unveiled, presumably by a viral protein, and a fraction of NS1 is exported in the cytoplasm.</text>
</comment>
<comment type="alternative products">
    <event type="alternative splicing"/>
    <isoform>
        <id>Q2ICQ4-1</id>
        <name>NS1</name>
        <sequence type="displayed"/>
    </isoform>
    <isoform>
        <id>Q2ICQ5-1</id>
        <name>NEP</name>
        <name>NS2</name>
        <sequence type="external"/>
    </isoform>
</comment>
<comment type="domain">
    <text evidence="1">The dsRNA-binding region is required for suppression of RNA silencing.</text>
</comment>
<comment type="PTM">
    <text evidence="1">Upon interferon induction, ISGylated via host HERC5; this results in the impairment of NS1 interaction with RNA targets due to its inability to form homodimers and to interact with host EIF2AK2/PKR.</text>
</comment>
<comment type="similarity">
    <text evidence="1">Belongs to the influenza A viruses NS1 family.</text>
</comment>
<organismHost>
    <name type="scientific">Aves</name>
    <dbReference type="NCBI Taxonomy" id="8782"/>
</organismHost>
<organismHost>
    <name type="scientific">Cetacea</name>
    <name type="common">whales</name>
    <dbReference type="NCBI Taxonomy" id="9721"/>
</organismHost>
<organismHost>
    <name type="scientific">Homo sapiens</name>
    <name type="common">Human</name>
    <dbReference type="NCBI Taxonomy" id="9606"/>
</organismHost>
<organismHost>
    <name type="scientific">Phocidae</name>
    <name type="common">true seals</name>
    <dbReference type="NCBI Taxonomy" id="9709"/>
</organismHost>
<organismHost>
    <name type="scientific">Sus scrofa</name>
    <name type="common">Pig</name>
    <dbReference type="NCBI Taxonomy" id="9823"/>
</organismHost>
<evidence type="ECO:0000255" key="1">
    <source>
        <dbReference type="HAMAP-Rule" id="MF_04066"/>
    </source>
</evidence>
<name>NS1_I72A4</name>
<organism>
    <name type="scientific">Influenza A virus (strain A/Memphis/101/1972 H3N2)</name>
    <dbReference type="NCBI Taxonomy" id="383583"/>
    <lineage>
        <taxon>Viruses</taxon>
        <taxon>Riboviria</taxon>
        <taxon>Orthornavirae</taxon>
        <taxon>Negarnaviricota</taxon>
        <taxon>Polyploviricotina</taxon>
        <taxon>Insthoviricetes</taxon>
        <taxon>Articulavirales</taxon>
        <taxon>Orthomyxoviridae</taxon>
        <taxon>Alphainfluenzavirus</taxon>
        <taxon>Alphainfluenzavirus influenzae</taxon>
        <taxon>Influenza A virus</taxon>
    </lineage>
</organism>